<protein>
    <recommendedName>
        <fullName evidence="9">Mitochondrial brown fat uncoupling protein 1</fullName>
        <shortName evidence="9">UCP 1</shortName>
    </recommendedName>
    <alternativeName>
        <fullName evidence="4">Solute carrier family 25 member 7</fullName>
    </alternativeName>
    <alternativeName>
        <fullName evidence="1">Thermogenin</fullName>
    </alternativeName>
</protein>
<dbReference type="EMBL" id="DAAA02044420">
    <property type="status" value="NOT_ANNOTATED_CDS"/>
    <property type="molecule type" value="Genomic_DNA"/>
</dbReference>
<dbReference type="EMBL" id="DAAA02044421">
    <property type="status" value="NOT_ANNOTATED_CDS"/>
    <property type="molecule type" value="Genomic_DNA"/>
</dbReference>
<dbReference type="EMBL" id="X14064">
    <property type="protein sequence ID" value="CAA32227.1"/>
    <property type="molecule type" value="mRNA"/>
</dbReference>
<dbReference type="PIR" id="S03603">
    <property type="entry name" value="S03603"/>
</dbReference>
<dbReference type="RefSeq" id="NP_001160000.1">
    <property type="nucleotide sequence ID" value="NM_001166528.1"/>
</dbReference>
<dbReference type="SMR" id="P10861"/>
<dbReference type="FunCoup" id="P10861">
    <property type="interactions" value="369"/>
</dbReference>
<dbReference type="STRING" id="9913.ENSBTAP00000006097"/>
<dbReference type="TCDB" id="2.A.29.3.1">
    <property type="family name" value="the mitochondrial carrier (mc) family"/>
</dbReference>
<dbReference type="PaxDb" id="9913-ENSBTAP00000006097"/>
<dbReference type="GeneID" id="281561"/>
<dbReference type="KEGG" id="bta:281561"/>
<dbReference type="CTD" id="7350"/>
<dbReference type="VEuPathDB" id="HostDB:ENSBTAG00000004647"/>
<dbReference type="eggNOG" id="KOG0753">
    <property type="taxonomic scope" value="Eukaryota"/>
</dbReference>
<dbReference type="InParanoid" id="P10861"/>
<dbReference type="OMA" id="YTSVPNC"/>
<dbReference type="OrthoDB" id="448427at2759"/>
<dbReference type="TreeFam" id="TF323211"/>
<dbReference type="Reactome" id="R-BTA-166187">
    <property type="pathway name" value="Mitochondrial Uncoupling"/>
</dbReference>
<dbReference type="Reactome" id="R-BTA-167826">
    <property type="pathway name" value="The fatty acid cycling model"/>
</dbReference>
<dbReference type="Proteomes" id="UP000009136">
    <property type="component" value="Chromosome 17"/>
</dbReference>
<dbReference type="Bgee" id="ENSBTAG00000004647">
    <property type="expression patterns" value="Expressed in semen and 12 other cell types or tissues"/>
</dbReference>
<dbReference type="GO" id="GO:0005743">
    <property type="term" value="C:mitochondrial inner membrane"/>
    <property type="evidence" value="ECO:0000250"/>
    <property type="project" value="UniProtKB"/>
</dbReference>
<dbReference type="GO" id="GO:1901612">
    <property type="term" value="F:cardiolipin binding"/>
    <property type="evidence" value="ECO:0000250"/>
    <property type="project" value="UniProtKB"/>
</dbReference>
<dbReference type="GO" id="GO:0036041">
    <property type="term" value="F:long-chain fatty acid binding"/>
    <property type="evidence" value="ECO:0000250"/>
    <property type="project" value="UniProtKB"/>
</dbReference>
<dbReference type="GO" id="GO:0017077">
    <property type="term" value="F:oxidative phosphorylation uncoupler activity"/>
    <property type="evidence" value="ECO:0000250"/>
    <property type="project" value="UniProtKB"/>
</dbReference>
<dbReference type="GO" id="GO:0032555">
    <property type="term" value="F:purine ribonucleotide binding"/>
    <property type="evidence" value="ECO:0000250"/>
    <property type="project" value="UniProtKB"/>
</dbReference>
<dbReference type="GO" id="GO:1990845">
    <property type="term" value="P:adaptive thermogenesis"/>
    <property type="evidence" value="ECO:0000250"/>
    <property type="project" value="UniProtKB"/>
</dbReference>
<dbReference type="GO" id="GO:0071398">
    <property type="term" value="P:cellular response to fatty acid"/>
    <property type="evidence" value="ECO:0000250"/>
    <property type="project" value="UniProtKB"/>
</dbReference>
<dbReference type="GO" id="GO:0032870">
    <property type="term" value="P:cellular response to hormone stimulus"/>
    <property type="evidence" value="ECO:0000250"/>
    <property type="project" value="UniProtKB"/>
</dbReference>
<dbReference type="GO" id="GO:0034614">
    <property type="term" value="P:cellular response to reactive oxygen species"/>
    <property type="evidence" value="ECO:0000250"/>
    <property type="project" value="UniProtKB"/>
</dbReference>
<dbReference type="GO" id="GO:1990542">
    <property type="term" value="P:mitochondrial transmembrane transport"/>
    <property type="evidence" value="ECO:0000250"/>
    <property type="project" value="UniProtKB"/>
</dbReference>
<dbReference type="GO" id="GO:1902600">
    <property type="term" value="P:proton transmembrane transport"/>
    <property type="evidence" value="ECO:0000250"/>
    <property type="project" value="UniProtKB"/>
</dbReference>
<dbReference type="GO" id="GO:1903426">
    <property type="term" value="P:regulation of reactive oxygen species biosynthetic process"/>
    <property type="evidence" value="ECO:0000250"/>
    <property type="project" value="UniProtKB"/>
</dbReference>
<dbReference type="GO" id="GO:0009409">
    <property type="term" value="P:response to cold"/>
    <property type="evidence" value="ECO:0000318"/>
    <property type="project" value="GO_Central"/>
</dbReference>
<dbReference type="GO" id="GO:0031667">
    <property type="term" value="P:response to nutrient levels"/>
    <property type="evidence" value="ECO:0000250"/>
    <property type="project" value="UniProtKB"/>
</dbReference>
<dbReference type="GO" id="GO:0009266">
    <property type="term" value="P:response to temperature stimulus"/>
    <property type="evidence" value="ECO:0000250"/>
    <property type="project" value="UniProtKB"/>
</dbReference>
<dbReference type="FunFam" id="1.50.40.10:FF:000068">
    <property type="entry name" value="Mitochondrial brown fat uncoupling protein 1"/>
    <property type="match status" value="1"/>
</dbReference>
<dbReference type="Gene3D" id="1.50.40.10">
    <property type="entry name" value="Mitochondrial carrier domain"/>
    <property type="match status" value="1"/>
</dbReference>
<dbReference type="InterPro" id="IPR002067">
    <property type="entry name" value="Mit_carrier"/>
</dbReference>
<dbReference type="InterPro" id="IPR050391">
    <property type="entry name" value="Mito_Metabolite_Transporter"/>
</dbReference>
<dbReference type="InterPro" id="IPR018108">
    <property type="entry name" value="Mitochondrial_sb/sol_carrier"/>
</dbReference>
<dbReference type="InterPro" id="IPR023395">
    <property type="entry name" value="Mt_carrier_dom_sf"/>
</dbReference>
<dbReference type="PANTHER" id="PTHR45618">
    <property type="entry name" value="MITOCHONDRIAL DICARBOXYLATE CARRIER-RELATED"/>
    <property type="match status" value="1"/>
</dbReference>
<dbReference type="Pfam" id="PF00153">
    <property type="entry name" value="Mito_carr"/>
    <property type="match status" value="3"/>
</dbReference>
<dbReference type="PRINTS" id="PR00784">
    <property type="entry name" value="MTUNCOUPLING"/>
</dbReference>
<dbReference type="SUPFAM" id="SSF103506">
    <property type="entry name" value="Mitochondrial carrier"/>
    <property type="match status" value="1"/>
</dbReference>
<dbReference type="PROSITE" id="PS50920">
    <property type="entry name" value="SOLCAR"/>
    <property type="match status" value="3"/>
</dbReference>
<proteinExistence type="evidence at transcript level"/>
<organism>
    <name type="scientific">Bos taurus</name>
    <name type="common">Bovine</name>
    <dbReference type="NCBI Taxonomy" id="9913"/>
    <lineage>
        <taxon>Eukaryota</taxon>
        <taxon>Metazoa</taxon>
        <taxon>Chordata</taxon>
        <taxon>Craniata</taxon>
        <taxon>Vertebrata</taxon>
        <taxon>Euteleostomi</taxon>
        <taxon>Mammalia</taxon>
        <taxon>Eutheria</taxon>
        <taxon>Laurasiatheria</taxon>
        <taxon>Artiodactyla</taxon>
        <taxon>Ruminantia</taxon>
        <taxon>Pecora</taxon>
        <taxon>Bovidae</taxon>
        <taxon>Bovinae</taxon>
        <taxon>Bos</taxon>
    </lineage>
</organism>
<keyword id="KW-0407">Ion channel</keyword>
<keyword id="KW-0406">Ion transport</keyword>
<keyword id="KW-0472">Membrane</keyword>
<keyword id="KW-0496">Mitochondrion</keyword>
<keyword id="KW-0999">Mitochondrion inner membrane</keyword>
<keyword id="KW-0558">Oxidation</keyword>
<keyword id="KW-1185">Reference proteome</keyword>
<keyword id="KW-0677">Repeat</keyword>
<keyword id="KW-0812">Transmembrane</keyword>
<keyword id="KW-1133">Transmembrane helix</keyword>
<keyword id="KW-0813">Transport</keyword>
<gene>
    <name evidence="4" type="primary">UCP1</name>
    <name evidence="4" type="synonym">SLC25A7</name>
    <name evidence="8" type="synonym">UCP</name>
</gene>
<comment type="function">
    <text evidence="3">Mitochondrial protein responsible for thermogenic respiration, a specialized capacity of brown adipose tissue and beige fat that participates in non-shivering adaptive thermogenesis to temperature and diet variations and more generally to the regulation of energy balance. Functions as a long-chain fatty acid/LCFA and proton symporter, simultaneously transporting one LCFA and one proton through the inner mitochondrial membrane. However, LCFAs remaining associated with the transporter via their hydrophobic tails, it results in an apparent transport of protons activated by LCFAs. Thereby, dissipates the mitochondrial proton gradient and converts the energy of substrate oxydation into heat instead of ATP. Regulates the production of reactive oxygen species/ROS by mitochondria.</text>
</comment>
<comment type="catalytic activity">
    <reaction evidence="4">
        <text>H(+)(in) = H(+)(out)</text>
        <dbReference type="Rhea" id="RHEA:34979"/>
        <dbReference type="ChEBI" id="CHEBI:15378"/>
    </reaction>
</comment>
<comment type="activity regulation">
    <text evidence="3">Has no constitutive proton transporter activity and has to be activated by long-chain fatty acids/LCFAs. Inhibited by purine nucleotides. Both purine nucleotides and LCFAs bind the cytosolic side of the transporter and directly compete to activate or inhibit it. Activated by noradrenaline and reactive oxygen species. Despite lacking canonical translational encoding for selenocysteine, a small pool of the protein has been observed to selectively incorporate selenocysteine at 'Cys-256'. Selenocysteine-modified protein is highly sensitive to redox modification and may constitute a pool of protein highly sensitive to activation by elevated levels of reactive oxygen species (ROS).</text>
</comment>
<comment type="subunit">
    <text evidence="4 5">Most probably functions as a monomer. Binds one purine nucleotide per monomer. However, has also been suggested to function as a homodimer or a homotetramer. Tightly associates with cardiolipin in the mitochondrion inner membrane; may stabilize and regulate its activity.</text>
</comment>
<comment type="subcellular location">
    <subcellularLocation>
        <location evidence="3">Mitochondrion inner membrane</location>
        <topology evidence="2">Multi-pass membrane protein</topology>
    </subcellularLocation>
</comment>
<comment type="PTM">
    <text evidence="3">May undergo sulfenylation upon cold exposure. May increase the sensitivity of UCP1 thermogenic function to the activation by noradrenaline probably through structural effects.</text>
</comment>
<comment type="PTM">
    <text evidence="2">May undergo ubiquitin-mediated proteasomal degradation.</text>
</comment>
<comment type="similarity">
    <text evidence="9">Belongs to the mitochondrial carrier (TC 2.A.29) family.</text>
</comment>
<reference key="1">
    <citation type="journal article" date="2009" name="Genome Biol.">
        <title>A whole-genome assembly of the domestic cow, Bos taurus.</title>
        <authorList>
            <person name="Zimin A.V."/>
            <person name="Delcher A.L."/>
            <person name="Florea L."/>
            <person name="Kelley D.R."/>
            <person name="Schatz M.C."/>
            <person name="Puiu D."/>
            <person name="Hanrahan F."/>
            <person name="Pertea G."/>
            <person name="Van Tassell C.P."/>
            <person name="Sonstegard T.S."/>
            <person name="Marcais G."/>
            <person name="Roberts M."/>
            <person name="Subramanian P."/>
            <person name="Yorke J.A."/>
            <person name="Salzberg S.L."/>
        </authorList>
    </citation>
    <scope>NUCLEOTIDE SEQUENCE [LARGE SCALE GENOMIC DNA]</scope>
    <source>
        <strain>Hereford</strain>
    </source>
</reference>
<reference key="2">
    <citation type="journal article" date="1989" name="Nucleic Acids Res.">
        <title>Nucleotide sequence of a cDNA encoding bovine brown fat uncoupling protein. Homology with ADP binding site of ADP/ATP carrier.</title>
        <authorList>
            <person name="Casteilla L."/>
            <person name="Bouillaud F."/>
            <person name="Forest C."/>
            <person name="Ricquier D."/>
        </authorList>
    </citation>
    <scope>NUCLEOTIDE SEQUENCE [MRNA] OF 17-309</scope>
    <source>
        <strain>Friesian</strain>
    </source>
</reference>
<reference key="3">
    <citation type="submission" date="1996-08" db="EMBL/GenBank/DDBJ databases">
        <authorList>
            <person name="Bouillaud F."/>
        </authorList>
    </citation>
    <scope>SEQUENCE REVISION</scope>
</reference>
<evidence type="ECO:0000250" key="1">
    <source>
        <dbReference type="UniProtKB" id="P04575"/>
    </source>
</evidence>
<evidence type="ECO:0000250" key="2">
    <source>
        <dbReference type="UniProtKB" id="P04633"/>
    </source>
</evidence>
<evidence type="ECO:0000250" key="3">
    <source>
        <dbReference type="UniProtKB" id="P12242"/>
    </source>
</evidence>
<evidence type="ECO:0000250" key="4">
    <source>
        <dbReference type="UniProtKB" id="P25874"/>
    </source>
</evidence>
<evidence type="ECO:0000250" key="5">
    <source>
        <dbReference type="UniProtKB" id="W5PSH7"/>
    </source>
</evidence>
<evidence type="ECO:0000255" key="6"/>
<evidence type="ECO:0000255" key="7">
    <source>
        <dbReference type="PROSITE-ProRule" id="PRU00282"/>
    </source>
</evidence>
<evidence type="ECO:0000303" key="8">
    <source>
    </source>
</evidence>
<evidence type="ECO:0000305" key="9"/>
<sequence length="309" mass="33360">MVGHTESDVPPTMAVKIFSAGVAACVADIITFPLDTAKVRLQVGSAIQGECLISSAIRYKGVLGTIITLAKTEGPVKLYSGLPAGLQRQISFASLRIGLYDTVQEFFTTGKEASLGSKISAGLMTGGVAVFIGQPTEVVKVRLQAQSHLHGPKPRYTGTYNAYRIIATTEGLTGLWKGTTPNLTRNVIINCTELVTYDLMKEALVKNKLLADDVPCHFVSAVVAGFCTTVLSSPVDVVKTRFVNSSPGQYTSVPNCAMMMLTREGPSAFFKGFVPSFLRLGSWNIIMFVCFEQLKQELMKSRHTMDCAT</sequence>
<name>UCP1_BOVIN</name>
<accession>P10861</accession>
<accession>F1MTU3</accession>
<feature type="chain" id="PRO_0000090654" description="Mitochondrial brown fat uncoupling protein 1">
    <location>
        <begin position="1"/>
        <end position="309"/>
    </location>
</feature>
<feature type="topological domain" description="Mitochondrial intermembrane" evidence="9">
    <location>
        <begin position="2"/>
        <end position="10"/>
    </location>
</feature>
<feature type="transmembrane region" description="Helical; Name=1" evidence="6">
    <location>
        <begin position="11"/>
        <end position="32"/>
    </location>
</feature>
<feature type="topological domain" description="Mitochondrial matrix" evidence="9">
    <location>
        <begin position="33"/>
        <end position="77"/>
    </location>
</feature>
<feature type="transmembrane region" description="Helical; Name=2" evidence="6">
    <location>
        <begin position="78"/>
        <end position="100"/>
    </location>
</feature>
<feature type="topological domain" description="Mitochondrial intermembrane" evidence="9">
    <location>
        <begin position="101"/>
        <end position="118"/>
    </location>
</feature>
<feature type="transmembrane region" description="Helical; Name=3" evidence="6">
    <location>
        <begin position="119"/>
        <end position="135"/>
    </location>
</feature>
<feature type="topological domain" description="Mitochondrial matrix" evidence="9">
    <location>
        <begin position="136"/>
        <end position="180"/>
    </location>
</feature>
<feature type="transmembrane region" description="Helical; Name=4" evidence="6">
    <location>
        <begin position="181"/>
        <end position="197"/>
    </location>
</feature>
<feature type="topological domain" description="Mitochondrial intermembrane" evidence="9">
    <location>
        <begin position="198"/>
        <end position="214"/>
    </location>
</feature>
<feature type="transmembrane region" description="Helical; Name=5" evidence="6">
    <location>
        <begin position="215"/>
        <end position="234"/>
    </location>
</feature>
<feature type="topological domain" description="Mitochondrial matrix" evidence="9">
    <location>
        <begin position="235"/>
        <end position="268"/>
    </location>
</feature>
<feature type="transmembrane region" description="Helical; Name=6" evidence="6">
    <location>
        <begin position="269"/>
        <end position="291"/>
    </location>
</feature>
<feature type="topological domain" description="Mitochondrial intermembrane" evidence="9">
    <location>
        <begin position="292"/>
        <end position="309"/>
    </location>
</feature>
<feature type="repeat" description="Solcar 1" evidence="7">
    <location>
        <begin position="11"/>
        <end position="106"/>
    </location>
</feature>
<feature type="repeat" description="Solcar 2" evidence="7">
    <location>
        <begin position="113"/>
        <end position="203"/>
    </location>
</feature>
<feature type="repeat" description="Solcar 3" evidence="7">
    <location>
        <begin position="212"/>
        <end position="297"/>
    </location>
</feature>
<feature type="binding site" evidence="4">
    <location>
        <position position="60"/>
    </location>
    <ligand>
        <name>fatty acid 16:0</name>
        <dbReference type="ChEBI" id="CHEBI:78123"/>
    </ligand>
</feature>
<feature type="binding site" evidence="4">
    <location>
        <position position="271"/>
    </location>
    <ligand>
        <name>fatty acid 16:0</name>
        <dbReference type="ChEBI" id="CHEBI:78123"/>
    </ligand>
</feature>
<feature type="modified residue" description="Cysteine sulfenic acid (-SOH)" evidence="3">
    <location>
        <position position="256"/>
    </location>
</feature>
<feature type="sequence conflict" description="In Ref. 2; CAA32227." evidence="9" ref="2">
    <location>
        <begin position="43"/>
        <end position="46"/>
    </location>
</feature>
<feature type="sequence conflict" description="In Ref. 2; CAA32227." evidence="9" ref="2">
    <original>F</original>
    <variation>L</variation>
    <location>
        <position position="92"/>
    </location>
</feature>
<feature type="sequence conflict" description="In Ref. 2; CAA32227." evidence="9" ref="2">
    <original>T</original>
    <variation>S</variation>
    <location>
        <position position="180"/>
    </location>
</feature>
<feature type="sequence conflict" description="In Ref. 2; CAA32227." evidence="9" ref="2">
    <original>R</original>
    <variation>T</variation>
    <location>
        <position position="185"/>
    </location>
</feature>
<feature type="sequence conflict" description="In Ref. 2; CAA32227." evidence="9" ref="2">
    <original>Y</original>
    <variation>N</variation>
    <location>
        <position position="250"/>
    </location>
</feature>
<feature type="sequence conflict" description="In Ref. 2; CAA32227." evidence="9" ref="2">
    <location>
        <position position="285"/>
    </location>
</feature>
<feature type="sequence conflict" description="In Ref. 2; CAA32227." evidence="9" ref="2">
    <original>Q</original>
    <variation>R</variation>
    <location>
        <position position="293"/>
    </location>
</feature>
<feature type="sequence conflict" description="In Ref. 2; CAA32227." evidence="9" ref="2">
    <original>S</original>
    <variation>C</variation>
    <location>
        <position position="301"/>
    </location>
</feature>